<comment type="function">
    <text evidence="3 4">Induces host cell G0/G1 arrest and apoptosis.</text>
</comment>
<comment type="subunit">
    <text evidence="5">Interacts with host RUNX1 isoform b.</text>
</comment>
<comment type="interaction">
    <interactant intactId="EBI-25489004">
        <id>P59633</id>
    </interactant>
    <interactant intactId="EBI-925940">
        <id>Q01196-1</id>
        <label>RUNX1</label>
    </interactant>
    <organismsDiffer>true</organismsDiffer>
    <experiments>6</experiments>
</comment>
<comment type="subcellular location">
    <subcellularLocation>
        <location evidence="2">Host nucleus</location>
        <location evidence="2">Host nucleolus</location>
    </subcellularLocation>
    <subcellularLocation>
        <location evidence="4">Host mitochondrion</location>
    </subcellularLocation>
</comment>
<keyword id="KW-0053">Apoptosis</keyword>
<keyword id="KW-1077">G0/G1 host cell cycle checkpoint dysregulation by virus</keyword>
<keyword id="KW-1045">Host mitochondrion</keyword>
<keyword id="KW-1048">Host nucleus</keyword>
<keyword id="KW-0945">Host-virus interaction</keyword>
<keyword id="KW-1119">Modulation of host cell apoptosis by virus</keyword>
<keyword id="KW-1121">Modulation of host cell cycle by virus</keyword>
<keyword id="KW-1185">Reference proteome</keyword>
<organismHost>
    <name type="scientific">Homo sapiens</name>
    <name type="common">Human</name>
    <dbReference type="NCBI Taxonomy" id="9606"/>
</organismHost>
<organismHost>
    <name type="scientific">Paguma larvata</name>
    <name type="common">Masked palm civet</name>
    <dbReference type="NCBI Taxonomy" id="9675"/>
</organismHost>
<name>NS3B_SARS</name>
<organism>
    <name type="scientific">Severe acute respiratory syndrome coronavirus</name>
    <name type="common">SARS-CoV</name>
    <dbReference type="NCBI Taxonomy" id="694009"/>
    <lineage>
        <taxon>Viruses</taxon>
        <taxon>Riboviria</taxon>
        <taxon>Orthornavirae</taxon>
        <taxon>Pisuviricota</taxon>
        <taxon>Pisoniviricetes</taxon>
        <taxon>Nidovirales</taxon>
        <taxon>Cornidovirineae</taxon>
        <taxon>Coronaviridae</taxon>
        <taxon>Orthocoronavirinae</taxon>
        <taxon>Betacoronavirus</taxon>
        <taxon>Sarbecovirus</taxon>
    </lineage>
</organism>
<sequence>MMPTTLFAGTHITMTTVYHITVSQIQLSLLKVTAFQHQNSKKTTKLVVILRIGTQVLKTMSLYMAISPKFTTSLSLHKLLQTLVLKMLHSSSLTSLLKTHRMCKYTQSTALQELLIQQWIQFMMSRRRLLACLCKHKKVSTNLCTHSFRKKQVR</sequence>
<feature type="chain" id="PRO_0000106132" description="ORF3b protein">
    <location>
        <begin position="1"/>
        <end position="154"/>
    </location>
</feature>
<feature type="region of interest" description="Mitochondrial targeting signal">
    <location>
        <begin position="80"/>
        <end position="138"/>
    </location>
</feature>
<feature type="region of interest" description="Nucleolar targeting">
    <location>
        <begin position="134"/>
        <end position="154"/>
    </location>
</feature>
<feature type="short sequence motif" description="Bipartite nuclear localization signal" evidence="1">
    <location>
        <begin position="135"/>
        <end position="153"/>
    </location>
</feature>
<feature type="sequence variant" description="In strain: Isolate GD01.">
    <original>K</original>
    <variation>Q</variation>
    <location>
        <position position="31"/>
    </location>
</feature>
<feature type="sequence variant" description="In strain: Isolate BJ02.">
    <original>T</original>
    <variation>I</variation>
    <location>
        <position position="99"/>
    </location>
</feature>
<feature type="sequence variant" description="In strain: Isolate GD01.">
    <original>L</original>
    <variation>Q</variation>
    <location>
        <position position="115"/>
    </location>
</feature>
<feature type="sequence variant" description="In strain: Isolate BJ01 and Isolate BJ04.">
    <original>Q</original>
    <variation>P</variation>
    <location>
        <position position="121"/>
    </location>
</feature>
<accession>P59633</accession>
<accession>Q7TFA9</accession>
<accession>Q80BV4</accession>
<proteinExistence type="evidence at protein level"/>
<protein>
    <recommendedName>
        <fullName>ORF3b protein</fullName>
    </recommendedName>
    <alternativeName>
        <fullName>Accessory protein 3b</fullName>
    </alternativeName>
    <alternativeName>
        <fullName>Non-structural protein 3b</fullName>
        <shortName>ns3b</shortName>
    </alternativeName>
    <alternativeName>
        <fullName>Protein X2</fullName>
    </alternativeName>
</protein>
<reference key="1">
    <citation type="journal article" date="2003" name="Science">
        <title>Characterization of a novel coronavirus associated with severe acute respiratory syndrome.</title>
        <authorList>
            <person name="Rota P.A."/>
            <person name="Oberste M.S."/>
            <person name="Monroe S.S."/>
            <person name="Nix W.A."/>
            <person name="Campagnoli R."/>
            <person name="Icenogle J.P."/>
            <person name="Penaranda S."/>
            <person name="Bankamp B."/>
            <person name="Maher K."/>
            <person name="Chen M.-H."/>
            <person name="Tong S."/>
            <person name="Tamin A."/>
            <person name="Lowe L."/>
            <person name="Frace M."/>
            <person name="DeRisi J.L."/>
            <person name="Chen Q."/>
            <person name="Wang D."/>
            <person name="Erdman D.D."/>
            <person name="Peret T.C.T."/>
            <person name="Burns C."/>
            <person name="Ksiazek T.G."/>
            <person name="Rollin P.E."/>
            <person name="Sanchez A."/>
            <person name="Liffick S."/>
            <person name="Holloway B."/>
            <person name="Limor J."/>
            <person name="McCaustland K."/>
            <person name="Olsen-Rasmussen M."/>
            <person name="Fouchier R."/>
            <person name="Guenther S."/>
            <person name="Osterhaus A.D.M.E."/>
            <person name="Drosten C."/>
            <person name="Pallansch M.A."/>
            <person name="Anderson L.J."/>
            <person name="Bellini W.J."/>
        </authorList>
    </citation>
    <scope>NUCLEOTIDE SEQUENCE [GENOMIC RNA]</scope>
    <source>
        <strain>Isolate Urbani</strain>
    </source>
</reference>
<reference key="2">
    <citation type="journal article" date="2003" name="Science">
        <title>The genome sequence of the SARS-associated coronavirus.</title>
        <authorList>
            <person name="Marra M.A."/>
            <person name="Jones S.J.M."/>
            <person name="Astell C.R."/>
            <person name="Holt R.A."/>
            <person name="Brooks-Wilson A."/>
            <person name="Butterfield Y.S.N."/>
            <person name="Khattra J."/>
            <person name="Asano J.K."/>
            <person name="Barber S.A."/>
            <person name="Chan S.Y."/>
            <person name="Cloutier A."/>
            <person name="Coughlin S.M."/>
            <person name="Freeman D."/>
            <person name="Girn N."/>
            <person name="Griffith O.L."/>
            <person name="Leach S.R."/>
            <person name="Mayo M."/>
            <person name="McDonald H."/>
            <person name="Montgomery S.B."/>
            <person name="Pandoh P.K."/>
            <person name="Petrescu A.S."/>
            <person name="Robertson A.G."/>
            <person name="Schein J.E."/>
            <person name="Siddiqui A."/>
            <person name="Smailus D.E."/>
            <person name="Stott J.M."/>
            <person name="Yang G.S."/>
            <person name="Plummer F."/>
            <person name="Andonov A."/>
            <person name="Artsob H."/>
            <person name="Bastien N."/>
            <person name="Bernard K."/>
            <person name="Booth T.F."/>
            <person name="Bowness D."/>
            <person name="Czub M."/>
            <person name="Drebot M."/>
            <person name="Fernando L."/>
            <person name="Flick R."/>
            <person name="Garbutt M."/>
            <person name="Gray M."/>
            <person name="Grolla A."/>
            <person name="Jones S."/>
            <person name="Feldmann H."/>
            <person name="Meyers A."/>
            <person name="Kabani A."/>
            <person name="Li Y."/>
            <person name="Normand S."/>
            <person name="Stroher U."/>
            <person name="Tipples G.A."/>
            <person name="Tyler S."/>
            <person name="Vogrig R."/>
            <person name="Ward D."/>
            <person name="Watson B."/>
            <person name="Brunham R.C."/>
            <person name="Krajden M."/>
            <person name="Petric M."/>
            <person name="Skowronski D.M."/>
            <person name="Upton C."/>
            <person name="Roper R.L."/>
        </authorList>
    </citation>
    <scope>NUCLEOTIDE SEQUENCE [GENOMIC RNA]</scope>
    <source>
        <strain>Isolate Tor2</strain>
    </source>
</reference>
<reference key="3">
    <citation type="journal article" date="2003" name="N. Engl. J. Med.">
        <title>Coronavirus genomic-sequence variations and the epidemiology of the severe acute respiratory syndrome.</title>
        <authorList>
            <person name="Tsui S.K.W."/>
            <person name="Chim S.S.C."/>
            <person name="Lo Y.M.D."/>
        </authorList>
    </citation>
    <scope>NUCLEOTIDE SEQUENCE [GENOMIC RNA]</scope>
    <source>
        <strain>Isolate CUHK-Su10</strain>
        <strain>Isolate CUHK-W1</strain>
    </source>
</reference>
<reference key="4">
    <citation type="journal article" date="2003" name="Exp. Biol. Med.">
        <title>The complete genome sequence of severe acute respiratory syndrome coronavirus strain HKU-39849 (HK-39).</title>
        <authorList>
            <person name="Zeng F.Y."/>
            <person name="Chan C.W."/>
            <person name="Chan M.N."/>
            <person name="Chen J.D."/>
            <person name="Chow K.Y.C."/>
            <person name="Hon C.C.C."/>
            <person name="Hui R.K.H."/>
            <person name="Li J."/>
            <person name="Li V.Y.Y."/>
            <person name="Wang C.Y."/>
            <person name="Wang P.Y."/>
            <person name="Guan Y."/>
            <person name="Zheng B."/>
            <person name="Poon L.L.M."/>
            <person name="Chan K.H."/>
            <person name="Yuen K.Y."/>
            <person name="Peiris J.S.M."/>
            <person name="Leung F.C."/>
        </authorList>
    </citation>
    <scope>NUCLEOTIDE SEQUENCE [GENOMIC RNA]</scope>
    <source>
        <strain>Isolate HKU-39849</strain>
    </source>
</reference>
<reference key="5">
    <citation type="submission" date="2003-04" db="EMBL/GenBank/DDBJ databases">
        <authorList>
            <person name="Qin E."/>
            <person name="Zhu Q."/>
            <person name="Yu M."/>
            <person name="Fan B."/>
            <person name="Chang G."/>
            <person name="Si B."/>
            <person name="Yang B."/>
            <person name="Peng W."/>
            <person name="Jiang T."/>
            <person name="Liu B."/>
            <person name="Deng Y."/>
            <person name="Liu H."/>
            <person name="Zhang Y."/>
            <person name="Wang C."/>
            <person name="Li Y."/>
            <person name="Gan Y."/>
            <person name="Li X."/>
            <person name="Lu F."/>
            <person name="Tan G."/>
            <person name="Yang R."/>
            <person name="Cao W.S."/>
            <person name="Wang J."/>
            <person name="Chen W."/>
            <person name="Cong L."/>
            <person name="Deng Y."/>
            <person name="Dong W."/>
            <person name="Han Y."/>
            <person name="Hu W."/>
            <person name="Lei M."/>
            <person name="Li C."/>
            <person name="Li G."/>
            <person name="Li G."/>
            <person name="Li H."/>
            <person name="Li S."/>
            <person name="Li S."/>
            <person name="Li W."/>
            <person name="Li W."/>
            <person name="Lin W."/>
            <person name="Liu J."/>
            <person name="Liu Z."/>
            <person name="Lu H."/>
            <person name="Ni P."/>
            <person name="Qi Q."/>
            <person name="Sun Y."/>
            <person name="Tang L."/>
            <person name="Tong Z."/>
            <person name="Wang J."/>
            <person name="Wang X."/>
            <person name="Wu Q."/>
            <person name="Xi Y."/>
            <person name="Xu Z."/>
            <person name="Yang L."/>
            <person name="Ye C."/>
            <person name="Ye J."/>
            <person name="Zhang B."/>
            <person name="Zhang F."/>
            <person name="Zhang J."/>
            <person name="Zhang X."/>
            <person name="Zhou J."/>
            <person name="Yang H."/>
        </authorList>
    </citation>
    <scope>NUCLEOTIDE SEQUENCE [GENOMIC RNA]</scope>
    <source>
        <strain>Isolate BJ01</strain>
        <strain>Isolate BJ02</strain>
        <strain>Isolate BJ03</strain>
        <strain>Isolate BJ04</strain>
        <strain>Isolate GD01</strain>
    </source>
</reference>
<reference key="6">
    <citation type="submission" date="2003-05" db="EMBL/GenBank/DDBJ databases">
        <title>The complete genome of SARS coronavirus clone TW1.</title>
        <authorList>
            <person name="Yeh S.-H."/>
            <person name="Kao C.-L."/>
            <person name="Tsai C.-Y."/>
            <person name="Liu C.-J."/>
            <person name="Chen D.-S."/>
            <person name="Chen P.-J."/>
        </authorList>
    </citation>
    <scope>NUCLEOTIDE SEQUENCE [GENOMIC RNA]</scope>
    <source>
        <strain>Isolate TW1</strain>
    </source>
</reference>
<reference key="7">
    <citation type="submission" date="2003-05" db="EMBL/GenBank/DDBJ databases">
        <title>SARS virus is a close relative of type II coronaviruses.</title>
        <authorList>
            <person name="Eickmann M."/>
            <person name="Becker S."/>
            <person name="Klenk H.-D."/>
            <person name="Doerr H.W."/>
            <person name="Stadler K."/>
            <person name="Censini S."/>
            <person name="Guidotti S."/>
            <person name="Masignani V."/>
            <person name="Scarselli M."/>
            <person name="Mora M."/>
            <person name="Donati C."/>
            <person name="Han J."/>
            <person name="Song H.C."/>
            <person name="Abrignani S."/>
            <person name="Covacci A."/>
            <person name="Rappuoli R."/>
        </authorList>
    </citation>
    <scope>NUCLEOTIDE SEQUENCE [GENOMIC RNA]</scope>
    <source>
        <strain>Isolate FRA</strain>
    </source>
</reference>
<reference key="8">
    <citation type="submission" date="2003-05" db="EMBL/GenBank/DDBJ databases">
        <authorList>
            <person name="Thiel V."/>
            <person name="Hertzig T."/>
            <person name="Putics A."/>
            <person name="Ivanov K.A."/>
            <person name="Schelle B."/>
            <person name="Bayer S."/>
            <person name="Scheiner B."/>
            <person name="Weinand H."/>
            <person name="Weissbrich B."/>
            <person name="Ziebuhr J."/>
        </authorList>
    </citation>
    <scope>NUCLEOTIDE SEQUENCE [GENOMIC RNA]</scope>
    <source>
        <strain>Isolate Frankfurt 1</strain>
    </source>
</reference>
<reference key="9">
    <citation type="submission" date="2004-01" db="EMBL/GenBank/DDBJ databases">
        <title>Analysis of SARS coronavirus genome in Shanghai isolates.</title>
        <authorList>
            <person name="Yuan Z."/>
            <person name="Zhang X."/>
            <person name="Hu Y."/>
            <person name="Lan S."/>
            <person name="Wang H."/>
            <person name="Zhou Z."/>
            <person name="Wen Y."/>
        </authorList>
    </citation>
    <scope>NUCLEOTIDE SEQUENCE [GENOMIC RNA]</scope>
    <source>
        <strain>Isolate Shanghai QXC1</strain>
    </source>
</reference>
<reference key="10">
    <citation type="submission" date="2003-07" db="EMBL/GenBank/DDBJ databases">
        <authorList>
            <person name="Chang J.-G.C."/>
            <person name="Lin T.-H."/>
            <person name="Chen C.-M."/>
            <person name="Lin C.-S."/>
            <person name="Chan W.-L."/>
            <person name="Shih M.-C."/>
        </authorList>
    </citation>
    <scope>NUCLEOTIDE SEQUENCE [GENOMIC RNA]</scope>
    <source>
        <strain>Isolate Taiwan TC1</strain>
        <strain>Isolate Taiwan TC2</strain>
        <strain>Isolate Taiwan TC3</strain>
    </source>
</reference>
<reference key="11">
    <citation type="submission" date="2003-07" db="EMBL/GenBank/DDBJ databases">
        <title>The complete genome of SARS coronavirus TWH.</title>
        <authorList>
            <person name="Shu H.Y."/>
            <person name="Wu K.M."/>
            <person name="Tsai S.F."/>
        </authorList>
    </citation>
    <scope>NUCLEOTIDE SEQUENCE [GENOMIC RNA]</scope>
    <source>
        <strain>Isolate TWH</strain>
        <strain>Isolate TWJ</strain>
        <strain>Isolate TWK</strain>
        <strain>Isolate TWS</strain>
        <strain>Isolate TWY</strain>
    </source>
</reference>
<reference key="12">
    <citation type="submission" date="2003-07" db="EMBL/GenBank/DDBJ databases">
        <authorList>
            <person name="Canducci F."/>
            <person name="Clementi M."/>
            <person name="Poli G."/>
            <person name="Vicenzi E."/>
        </authorList>
    </citation>
    <scope>NUCLEOTIDE SEQUENCE [GENOMIC RNA]</scope>
    <source>
        <strain>Isolate HSR 1</strain>
    </source>
</reference>
<reference key="13">
    <citation type="submission" date="2003-10" db="EMBL/GenBank/DDBJ databases">
        <authorList>
            <person name="Balotta C."/>
            <person name="Corvasce S."/>
            <person name="Violin M."/>
            <person name="Galli M."/>
            <person name="Moroni M."/>
            <person name="Vigevani G.M."/>
            <person name="Ruan Y.J."/>
            <person name="Salemi M."/>
        </authorList>
    </citation>
    <scope>NUCLEOTIDE SEQUENCE [GENOMIC RNA]</scope>
    <source>
        <strain>Isolate AS</strain>
    </source>
</reference>
<reference key="14">
    <citation type="journal article" date="2005" name="Virol. J.">
        <title>G0/G1 arrest and apoptosis induced by SARS-CoV 3b protein in transfected cells.</title>
        <authorList>
            <person name="Yuan X."/>
            <person name="Shan Y."/>
            <person name="Zhao Z."/>
            <person name="Chen J."/>
            <person name="Cong Y."/>
        </authorList>
    </citation>
    <scope>FUNCTION</scope>
</reference>
<reference key="15">
    <citation type="journal article" date="2005" name="Virus Res.">
        <title>Nucleolar localization of non-structural protein 3b, a protein specifically encoded by the severe acute respiratory syndrome coronavirus.</title>
        <authorList>
            <person name="Yuan X."/>
            <person name="Yao Z."/>
            <person name="Shan Y."/>
            <person name="Chen B."/>
            <person name="Yang Z."/>
            <person name="Wu J."/>
            <person name="Zhao Z."/>
            <person name="Chen J."/>
            <person name="Cong Y."/>
        </authorList>
    </citation>
    <scope>SUBCELLULAR LOCATION</scope>
</reference>
<reference key="16">
    <citation type="journal article" date="2006" name="Mol. Cells">
        <title>Mitochondrial location of severe acute respiratory syndrome coronavirus 3b protein.</title>
        <authorList>
            <person name="Yuan X."/>
            <person name="Shan Y."/>
            <person name="Yao Z."/>
            <person name="Li J."/>
            <person name="Zhao Z."/>
            <person name="Chen J."/>
            <person name="Cong Y."/>
        </authorList>
    </citation>
    <scope>FUNCTION</scope>
    <scope>SUBCELLULAR LOCATION</scope>
</reference>
<reference key="17">
    <citation type="journal article" date="2012" name="PLoS ONE">
        <title>SARS coronavirus 3b accessory protein modulates transcriptional activity of RUNX1b.</title>
        <authorList>
            <person name="Varshney B."/>
            <person name="Agnihothram S."/>
            <person name="Agnihotram S."/>
            <person name="Tan Y.J."/>
            <person name="Baric R."/>
            <person name="Lal S.K."/>
        </authorList>
    </citation>
    <scope>INTERACTION WITH HOST RUNX1</scope>
</reference>
<dbReference type="EMBL" id="AY278741">
    <property type="protein sequence ID" value="AAP13447.1"/>
    <property type="molecule type" value="Genomic_RNA"/>
</dbReference>
<dbReference type="EMBL" id="AY274119">
    <property type="protein sequence ID" value="AAP41039.1"/>
    <property type="molecule type" value="Genomic_RNA"/>
</dbReference>
<dbReference type="EMBL" id="AY282752">
    <property type="status" value="NOT_ANNOTATED_CDS"/>
    <property type="molecule type" value="Genomic_RNA"/>
</dbReference>
<dbReference type="EMBL" id="AY278554">
    <property type="protein sequence ID" value="AAP13569.1"/>
    <property type="molecule type" value="Genomic_RNA"/>
</dbReference>
<dbReference type="EMBL" id="AY278491">
    <property type="status" value="NOT_ANNOTATED_CDS"/>
    <property type="molecule type" value="Genomic_RNA"/>
</dbReference>
<dbReference type="EMBL" id="AY278487">
    <property type="status" value="NOT_ANNOTATED_CDS"/>
    <property type="molecule type" value="Genomic_RNA"/>
</dbReference>
<dbReference type="EMBL" id="AY278488">
    <property type="protein sequence ID" value="AAP30032.1"/>
    <property type="molecule type" value="Genomic_RNA"/>
</dbReference>
<dbReference type="EMBL" id="AY278489">
    <property type="protein sequence ID" value="AAP51229.1"/>
    <property type="molecule type" value="Genomic_RNA"/>
</dbReference>
<dbReference type="EMBL" id="AY278490">
    <property type="status" value="NOT_ANNOTATED_CDS"/>
    <property type="molecule type" value="Genomic_RNA"/>
</dbReference>
<dbReference type="EMBL" id="AY279354">
    <property type="status" value="NOT_ANNOTATED_CDS"/>
    <property type="molecule type" value="Genomic_RNA"/>
</dbReference>
<dbReference type="EMBL" id="AY291451">
    <property type="protein sequence ID" value="AAP37019.1"/>
    <property type="molecule type" value="Genomic_RNA"/>
</dbReference>
<dbReference type="EMBL" id="AY310120">
    <property type="protein sequence ID" value="AAP50487.1"/>
    <property type="molecule type" value="Genomic_RNA"/>
</dbReference>
<dbReference type="EMBL" id="AY291315">
    <property type="protein sequence ID" value="AAP33699.1"/>
    <property type="molecule type" value="Genomic_RNA"/>
</dbReference>
<dbReference type="EMBL" id="AY463059">
    <property type="protein sequence ID" value="AAR86789.1"/>
    <property type="molecule type" value="Genomic_RNA"/>
</dbReference>
<dbReference type="EMBL" id="AY338174">
    <property type="protein sequence ID" value="AAQ01599.1"/>
    <property type="molecule type" value="Genomic_RNA"/>
</dbReference>
<dbReference type="EMBL" id="AY338175">
    <property type="protein sequence ID" value="AAQ01611.1"/>
    <property type="molecule type" value="Genomic_RNA"/>
</dbReference>
<dbReference type="EMBL" id="AY348314">
    <property type="protein sequence ID" value="AAP97884.1"/>
    <property type="molecule type" value="Genomic_RNA"/>
</dbReference>
<dbReference type="EMBL" id="AP006557">
    <property type="protein sequence ID" value="BAC81350.1"/>
    <property type="molecule type" value="Genomic_RNA"/>
</dbReference>
<dbReference type="EMBL" id="AP006558">
    <property type="protein sequence ID" value="BAC81364.1"/>
    <property type="molecule type" value="Genomic_RNA"/>
</dbReference>
<dbReference type="EMBL" id="AP006559">
    <property type="protein sequence ID" value="BAC81378.1"/>
    <property type="molecule type" value="Genomic_RNA"/>
</dbReference>
<dbReference type="EMBL" id="AP006560">
    <property type="protein sequence ID" value="BAC81392.1"/>
    <property type="molecule type" value="Genomic_RNA"/>
</dbReference>
<dbReference type="EMBL" id="AP006561">
    <property type="protein sequence ID" value="BAC81406.1"/>
    <property type="molecule type" value="Genomic_RNA"/>
</dbReference>
<dbReference type="EMBL" id="AY323977">
    <property type="protein sequence ID" value="AAP72976.1"/>
    <property type="molecule type" value="Genomic_RNA"/>
</dbReference>
<dbReference type="EMBL" id="AY427439">
    <property type="protein sequence ID" value="AAQ94062.1"/>
    <property type="molecule type" value="Genomic_RNA"/>
</dbReference>
<dbReference type="SMR" id="P59633"/>
<dbReference type="BioGRID" id="4383918">
    <property type="interactions" value="123"/>
</dbReference>
<dbReference type="IntAct" id="P59633">
    <property type="interactions" value="115"/>
</dbReference>
<dbReference type="MINT" id="P59633"/>
<dbReference type="Reactome" id="R-HSA-9692916">
    <property type="pathway name" value="SARS-CoV-1 activates/modulates innate immune responses"/>
</dbReference>
<dbReference type="SIGNOR" id="P59633"/>
<dbReference type="Proteomes" id="UP000000354">
    <property type="component" value="Segment"/>
</dbReference>
<dbReference type="Proteomes" id="UP000103670">
    <property type="component" value="Segment"/>
</dbReference>
<dbReference type="Proteomes" id="UP000109640">
    <property type="component" value="Segment"/>
</dbReference>
<dbReference type="Proteomes" id="UP000116947">
    <property type="component" value="Segment"/>
</dbReference>
<dbReference type="Proteomes" id="UP000121636">
    <property type="component" value="Segment"/>
</dbReference>
<dbReference type="Proteomes" id="UP000131569">
    <property type="component" value="Segment"/>
</dbReference>
<dbReference type="Proteomes" id="UP000131955">
    <property type="component" value="Segment"/>
</dbReference>
<dbReference type="Proteomes" id="UP000137377">
    <property type="component" value="Genome"/>
</dbReference>
<dbReference type="Proteomes" id="UP000138690">
    <property type="component" value="Segment"/>
</dbReference>
<dbReference type="Proteomes" id="UP000143093">
    <property type="component" value="Segment"/>
</dbReference>
<dbReference type="Proteomes" id="UP000145651">
    <property type="component" value="Segment"/>
</dbReference>
<dbReference type="Proteomes" id="UP000146108">
    <property type="component" value="Segment"/>
</dbReference>
<dbReference type="Proteomes" id="UP000146181">
    <property type="component" value="Segment"/>
</dbReference>
<dbReference type="Proteomes" id="UP000146296">
    <property type="component" value="Segment"/>
</dbReference>
<dbReference type="Proteomes" id="UP000148194">
    <property type="component" value="Segment"/>
</dbReference>
<dbReference type="Proteomes" id="UP000153467">
    <property type="component" value="Segment"/>
</dbReference>
<dbReference type="Proteomes" id="UP000160648">
    <property type="component" value="Segment"/>
</dbReference>
<dbReference type="Proteomes" id="UP000164441">
    <property type="component" value="Segment"/>
</dbReference>
<dbReference type="Proteomes" id="UP000172416">
    <property type="component" value="Segment"/>
</dbReference>
<dbReference type="Proteomes" id="UP000180358">
    <property type="component" value="Segment"/>
</dbReference>
<dbReference type="GO" id="GO:0033650">
    <property type="term" value="C:host cell mitochondrion"/>
    <property type="evidence" value="ECO:0007669"/>
    <property type="project" value="UniProtKB-SubCell"/>
</dbReference>
<dbReference type="GO" id="GO:0044196">
    <property type="term" value="C:host cell nucleolus"/>
    <property type="evidence" value="ECO:0007669"/>
    <property type="project" value="UniProtKB-SubCell"/>
</dbReference>
<dbReference type="GO" id="GO:0001817">
    <property type="term" value="P:regulation of cytokine production"/>
    <property type="evidence" value="ECO:0000270"/>
    <property type="project" value="CACAO"/>
</dbReference>
<dbReference type="GO" id="GO:0052150">
    <property type="term" value="P:symbiont-mediated perturbation of host apoptosis"/>
    <property type="evidence" value="ECO:0007669"/>
    <property type="project" value="UniProtKB-KW"/>
</dbReference>
<dbReference type="GO" id="GO:0039646">
    <property type="term" value="P:symbiont-mediated perturbation of host cell cycle G0/G1 transition checkpoint"/>
    <property type="evidence" value="ECO:0007669"/>
    <property type="project" value="UniProtKB-KW"/>
</dbReference>
<dbReference type="GO" id="GO:0044071">
    <property type="term" value="P:symbiont-mediated perturbation of host cell cycle progression"/>
    <property type="evidence" value="ECO:0007669"/>
    <property type="project" value="UniProtKB-KW"/>
</dbReference>
<dbReference type="CDD" id="cd21649">
    <property type="entry name" value="SARS-CoV_ORF3b"/>
    <property type="match status" value="1"/>
</dbReference>
<dbReference type="InterPro" id="IPR022117">
    <property type="entry name" value="SARS_3b"/>
</dbReference>
<dbReference type="Pfam" id="PF12383">
    <property type="entry name" value="SARS_3b"/>
    <property type="match status" value="1"/>
</dbReference>
<gene>
    <name type="ORF">3b</name>
</gene>
<evidence type="ECO:0000255" key="1"/>
<evidence type="ECO:0000269" key="2">
    <source>
    </source>
</evidence>
<evidence type="ECO:0000269" key="3">
    <source>
    </source>
</evidence>
<evidence type="ECO:0000269" key="4">
    <source>
    </source>
</evidence>
<evidence type="ECO:0000269" key="5">
    <source>
    </source>
</evidence>